<gene>
    <name type="primary">Gtf3c1</name>
</gene>
<proteinExistence type="evidence at protein level"/>
<organism>
    <name type="scientific">Mus musculus</name>
    <name type="common">Mouse</name>
    <dbReference type="NCBI Taxonomy" id="10090"/>
    <lineage>
        <taxon>Eukaryota</taxon>
        <taxon>Metazoa</taxon>
        <taxon>Chordata</taxon>
        <taxon>Craniata</taxon>
        <taxon>Vertebrata</taxon>
        <taxon>Euteleostomi</taxon>
        <taxon>Mammalia</taxon>
        <taxon>Eutheria</taxon>
        <taxon>Euarchontoglires</taxon>
        <taxon>Glires</taxon>
        <taxon>Rodentia</taxon>
        <taxon>Myomorpha</taxon>
        <taxon>Muroidea</taxon>
        <taxon>Muridae</taxon>
        <taxon>Murinae</taxon>
        <taxon>Mus</taxon>
        <taxon>Mus</taxon>
    </lineage>
</organism>
<name>TF3C1_MOUSE</name>
<keyword id="KW-0025">Alternative splicing</keyword>
<keyword id="KW-0238">DNA-binding</keyword>
<keyword id="KW-1017">Isopeptide bond</keyword>
<keyword id="KW-0539">Nucleus</keyword>
<keyword id="KW-0597">Phosphoprotein</keyword>
<keyword id="KW-1185">Reference proteome</keyword>
<keyword id="KW-0804">Transcription</keyword>
<keyword id="KW-0832">Ubl conjugation</keyword>
<sequence length="2101" mass="237476">MDALESLLDEVALEGLDGLCLPALWSRLESRSPAFPLPLEPYTQEFLWRALATHPGISFYEEPRERPDLQLQDRYEEIDLETGILESRRDPVTLEDVYPIHMILENKDGIQGSCRYFKERKDITSSIRSKCLQPRCTMVEAFSRWGKKLIIVASQDMRYRALIGLEGDPDLKLPDFSYCILERLGRSRWQGELQRDLHTTAFKVDAGKLHYHRKILNKNGLITMQSHVIRLPTGAQQHSILLLLNRFHVDRRSKYDILMEKLSMMLSTRSNQIETLGKLREELGLCERTFKRLYQYMLNAGLAKVVSLPLQEIHPECGPCKTKKGTDVMVRCLKLLKEFKRKMEDDHDDDDDEEVISKGVPPVDIVFERDMLTQTYELIERRGTKGISQAEIRVAMNVGKLEARMLCRLLQRFKVVKGFMEDEGRQRTTKYISCVFAEESDLSRQYAREKARGELLTTVSLASVQDESLMPEGEEAFLSDSESEEESSCSGGKRRGRGSRGHARASGDAGSGSRPHHSTPAKGGWKVLNLHPLKKPKAAAEERSRRSSACRDGLDTSSSSELNAPFDPHSMDSHSGDIAVIEEVRLDNPKEGGGSQKGGRHGSSQDKPHKTYRLLKRRNLIIEAVTNLRLIESLFTIQKMIMDQEKQEGVSTKCCKKSIIRLVRNLSEEGLLRLYRTTVIQDGIKKKVDLVVHPSMDQNDPLVRSAIEQVRFRISNSSTANRVKVPPAPAPQEEAEEENQEPEVPSRSANSDPNTSSKPESTRVKKTDEKMGITPLKNYKPVIVPGLGRSIGFLPKMPRLKAMHLFLWYLVYGHPAGHTGEQPALHSERKTGKQESSRPGAQPSSGDDWDTSEAKNNTESSSWESEMELSTEIVYVDEISWMRYVPPIPIHRDFGFGWALVSDILLCLPLSIFVQLVQVSYKVDNLEDFLNDPLKKHTLIRFLPRHIRQQLLYKRRYIFSVVENLQRLCYMGLLQFGPTEKFQDKDQVFVFLKKNAVIVDTTICDPHYNLAHSSRPFERRLYVLDSMQDVECYWFDLQCICLNTPLGVVRCPCAQKICPDPGSDPEGSLRKEQESAMDKHNLERKCAMLEYTTGSREVVDEGLVPGDGLGAAGLDSSFYAHLKRNWVWTSYIINKARKNNTSENGLTGRLQTFLSKRPMPLGSGGSGRLPLWSEGRADAELCADKEEQFELDREPTPGRNRKVRGGKSQKRKRLKKEPIRKTKRRRRGEHPEAKSKKLRYQDEADQNALRMMTRLRVSWSMQEDGLLMLCRIASNVLNTKVKGPFVTWQVVRDILHATFEESLDKTSHSVGRRARYIVKNPQAFMNYKVCLAEVYQDKALVGDFMSRKGNYEDPKVCAKEFKEFVEKLKEKFSSGLRNPNLEIPNTLQELFAKYRVLAIGDEKDRVRKEDELNSVEDIHFLVLQNLIQSTLSLSNSQSNSCQSFQIFRLYREFREPVLVRAFMECQKRSLVNRRRVSHSQGPKKNRAVPFVPMSYQLSQSYYKLFTWRFPTTICTESFQFYDRLRTNGMLDQPDHFSFKDLDSSDPSNDLVAFSLDSPGGHCVTALALFSLGLLSVDVRIPEQIVVVDSSMVESEVMKSLGKDGGLDDDEEEEDLDEGSGTKRQGVEVKAHQASHTKYLLMRGYYTVPGMVSTRNLNPNDSIVVNSCQVKFRLRNTPASTQLGPTGFTATPLEELQAGLSCLPASFTSLVDPQLRTHCPEEFAHQMAQSGYSPEDVAASLEILQAVAAADCFGIDKEKLSRQFSALEKIADRRTRTFLDYIQDLLEQEQVMEVGGNTVRLVTMASAQPWLLHSMRLRDMEVDTKASGDDSQSRLPEGPSIEDHTSEGAAVPPVSSHSTKKRPHCPETDAEEATRLPAKKPTLQDVRVAASPRPGAEEQAEAQAPAQLAAPEDADAGGPRQENQENVGVSGLEQLGCEFQLPEGSEDPRGLTESNMAQAAWESGCERVCFVGRPWRGVDGHLNMPVCKGMLEAVLYHIMSRPGVPESCLLQYYQGVLQPVAVLELLRGLESLGCIQKRTLRKPASVSLFSRPVVEGLGQASEAEALSCHESTVTFYEPTLDCTIRLGRVFPHDINWNKWIHL</sequence>
<feature type="chain" id="PRO_0000209711" description="General transcription factor 3C polypeptide 1">
    <location>
        <begin position="1"/>
        <end position="2101"/>
    </location>
</feature>
<feature type="region of interest" description="Disordered" evidence="3">
    <location>
        <begin position="473"/>
        <end position="574"/>
    </location>
</feature>
<feature type="region of interest" description="Disordered" evidence="3">
    <location>
        <begin position="588"/>
        <end position="609"/>
    </location>
</feature>
<feature type="region of interest" description="Disordered" evidence="3">
    <location>
        <begin position="718"/>
        <end position="772"/>
    </location>
</feature>
<feature type="region of interest" description="Disordered" evidence="3">
    <location>
        <begin position="820"/>
        <end position="864"/>
    </location>
</feature>
<feature type="region of interest" description="Disordered" evidence="3">
    <location>
        <begin position="1186"/>
        <end position="1239"/>
    </location>
</feature>
<feature type="region of interest" description="Disordered" evidence="3">
    <location>
        <begin position="1598"/>
        <end position="1627"/>
    </location>
</feature>
<feature type="region of interest" description="Disordered" evidence="3">
    <location>
        <begin position="1822"/>
        <end position="1923"/>
    </location>
</feature>
<feature type="compositionally biased region" description="Acidic residues" evidence="3">
    <location>
        <begin position="473"/>
        <end position="487"/>
    </location>
</feature>
<feature type="compositionally biased region" description="Basic residues" evidence="3">
    <location>
        <begin position="492"/>
        <end position="503"/>
    </location>
</feature>
<feature type="compositionally biased region" description="Low complexity" evidence="3">
    <location>
        <begin position="504"/>
        <end position="513"/>
    </location>
</feature>
<feature type="compositionally biased region" description="Polar residues" evidence="3">
    <location>
        <begin position="747"/>
        <end position="759"/>
    </location>
</feature>
<feature type="compositionally biased region" description="Basic and acidic residues" evidence="3">
    <location>
        <begin position="760"/>
        <end position="771"/>
    </location>
</feature>
<feature type="compositionally biased region" description="Basic and acidic residues" evidence="3">
    <location>
        <begin position="826"/>
        <end position="836"/>
    </location>
</feature>
<feature type="compositionally biased region" description="Basic and acidic residues" evidence="3">
    <location>
        <begin position="1186"/>
        <end position="1196"/>
    </location>
</feature>
<feature type="compositionally biased region" description="Basic residues" evidence="3">
    <location>
        <begin position="1199"/>
        <end position="1215"/>
    </location>
</feature>
<feature type="compositionally biased region" description="Basic and acidic residues" evidence="3">
    <location>
        <begin position="1229"/>
        <end position="1239"/>
    </location>
</feature>
<feature type="compositionally biased region" description="Acidic residues" evidence="3">
    <location>
        <begin position="1606"/>
        <end position="1617"/>
    </location>
</feature>
<feature type="compositionally biased region" description="Basic and acidic residues" evidence="3">
    <location>
        <begin position="1822"/>
        <end position="1831"/>
    </location>
</feature>
<feature type="compositionally biased region" description="Low complexity" evidence="3">
    <location>
        <begin position="1900"/>
        <end position="1910"/>
    </location>
</feature>
<feature type="modified residue" description="Phosphoserine" evidence="2">
    <location>
        <position position="667"/>
    </location>
</feature>
<feature type="modified residue" description="Phosphoserine" evidence="2">
    <location>
        <position position="1063"/>
    </location>
</feature>
<feature type="modified residue" description="Phosphothreonine" evidence="8">
    <location>
        <position position="1196"/>
    </location>
</feature>
<feature type="modified residue" description="Phosphoserine" evidence="2">
    <location>
        <position position="1854"/>
    </location>
</feature>
<feature type="modified residue" description="Phosphoserine" evidence="7 8">
    <location>
        <position position="1890"/>
    </location>
</feature>
<feature type="cross-link" description="Glycyl lysine isopeptide (Lys-Gly) (interchain with G-Cter in SUMO2)" evidence="2">
    <location>
        <position position="534"/>
    </location>
</feature>
<feature type="cross-link" description="Glycyl lysine isopeptide (Lys-Gly) (interchain with G-Cter in SUMO2)" evidence="2">
    <location>
        <position position="770"/>
    </location>
</feature>
<feature type="cross-link" description="Glycyl lysine isopeptide (Lys-Gly) (interchain with G-Cter in SUMO2)" evidence="2">
    <location>
        <position position="833"/>
    </location>
</feature>
<feature type="splice variant" id="VSP_010573" description="In isoform 3." evidence="5">
    <location>
        <begin position="1"/>
        <end position="156"/>
    </location>
</feature>
<feature type="splice variant" id="VSP_010574" description="In isoform 3." evidence="5">
    <original>TDVMVRCLKLLKEFKRKMEDDHDDDDDEEVISKGVPPVDIVFERDMLTQT</original>
    <variation>KSRTLWPTGSPCCHFLWSHSALKCEDYTSFSSLLLSAFYLKRIREVCPEF</variation>
    <location>
        <begin position="326"/>
        <end position="375"/>
    </location>
</feature>
<feature type="splice variant" id="VSP_010575" description="In isoform 3." evidence="5">
    <location>
        <begin position="376"/>
        <end position="2101"/>
    </location>
</feature>
<feature type="splice variant" id="VSP_010576" description="In isoform 2." evidence="4">
    <location>
        <begin position="1503"/>
        <end position="1598"/>
    </location>
</feature>
<feature type="sequence conflict" description="In Ref. 2; AAH32208." evidence="6" ref="2">
    <original>S</original>
    <variation>N</variation>
    <location>
        <position position="1599"/>
    </location>
</feature>
<evidence type="ECO:0000250" key="1"/>
<evidence type="ECO:0000250" key="2">
    <source>
        <dbReference type="UniProtKB" id="Q12789"/>
    </source>
</evidence>
<evidence type="ECO:0000256" key="3">
    <source>
        <dbReference type="SAM" id="MobiDB-lite"/>
    </source>
</evidence>
<evidence type="ECO:0000303" key="4">
    <source>
    </source>
</evidence>
<evidence type="ECO:0000303" key="5">
    <source>
    </source>
</evidence>
<evidence type="ECO:0000305" key="6"/>
<evidence type="ECO:0007744" key="7">
    <source>
    </source>
</evidence>
<evidence type="ECO:0007744" key="8">
    <source>
    </source>
</evidence>
<dbReference type="EMBL" id="AK038537">
    <property type="protein sequence ID" value="BAC30032.1"/>
    <property type="molecule type" value="mRNA"/>
</dbReference>
<dbReference type="EMBL" id="BC032208">
    <property type="protein sequence ID" value="AAH32208.1"/>
    <property type="status" value="ALT_INIT"/>
    <property type="molecule type" value="mRNA"/>
</dbReference>
<dbReference type="EMBL" id="BC067041">
    <property type="protein sequence ID" value="AAH67041.1"/>
    <property type="molecule type" value="mRNA"/>
</dbReference>
<dbReference type="CCDS" id="CCDS40122.1">
    <molecule id="Q8K284-1"/>
</dbReference>
<dbReference type="RefSeq" id="NP_997122.1">
    <molecule id="Q8K284-1"/>
    <property type="nucleotide sequence ID" value="NM_207239.1"/>
</dbReference>
<dbReference type="SMR" id="Q8K284"/>
<dbReference type="BioGRID" id="231457">
    <property type="interactions" value="13"/>
</dbReference>
<dbReference type="FunCoup" id="Q8K284">
    <property type="interactions" value="2305"/>
</dbReference>
<dbReference type="IntAct" id="Q8K284">
    <property type="interactions" value="4"/>
</dbReference>
<dbReference type="MINT" id="Q8K284"/>
<dbReference type="STRING" id="10090.ENSMUSP00000056719"/>
<dbReference type="GlyGen" id="Q8K284">
    <property type="glycosylation" value="2 sites, 1 N-linked glycan (1 site)"/>
</dbReference>
<dbReference type="iPTMnet" id="Q8K284"/>
<dbReference type="PhosphoSitePlus" id="Q8K284"/>
<dbReference type="SwissPalm" id="Q8K284"/>
<dbReference type="jPOST" id="Q8K284"/>
<dbReference type="PaxDb" id="10090-ENSMUSP00000056719"/>
<dbReference type="PeptideAtlas" id="Q8K284"/>
<dbReference type="ProteomicsDB" id="263291">
    <molecule id="Q8K284-1"/>
</dbReference>
<dbReference type="ProteomicsDB" id="263292">
    <molecule id="Q8K284-2"/>
</dbReference>
<dbReference type="ProteomicsDB" id="263293">
    <molecule id="Q8K284-3"/>
</dbReference>
<dbReference type="Pumba" id="Q8K284"/>
<dbReference type="Antibodypedia" id="26269">
    <property type="antibodies" value="42 antibodies from 11 providers"/>
</dbReference>
<dbReference type="DNASU" id="233863"/>
<dbReference type="Ensembl" id="ENSMUST00000055506.9">
    <molecule id="Q8K284-1"/>
    <property type="protein sequence ID" value="ENSMUSP00000056719.8"/>
    <property type="gene ID" value="ENSMUSG00000032777.10"/>
</dbReference>
<dbReference type="GeneID" id="233863"/>
<dbReference type="KEGG" id="mmu:233863"/>
<dbReference type="UCSC" id="uc009jqh.1">
    <molecule id="Q8K284-1"/>
    <property type="organism name" value="mouse"/>
</dbReference>
<dbReference type="UCSC" id="uc009jql.1">
    <molecule id="Q8K284-3"/>
    <property type="organism name" value="mouse"/>
</dbReference>
<dbReference type="UCSC" id="uc012fto.1">
    <molecule id="Q8K284-2"/>
    <property type="organism name" value="mouse"/>
</dbReference>
<dbReference type="AGR" id="MGI:107887"/>
<dbReference type="CTD" id="2975"/>
<dbReference type="MGI" id="MGI:107887">
    <property type="gene designation" value="Gtf3c1"/>
</dbReference>
<dbReference type="VEuPathDB" id="HostDB:ENSMUSG00000032777"/>
<dbReference type="eggNOG" id="KOG4560">
    <property type="taxonomic scope" value="Eukaryota"/>
</dbReference>
<dbReference type="GeneTree" id="ENSGT00390000008664"/>
<dbReference type="HOGENOM" id="CLU_001556_1_0_1"/>
<dbReference type="InParanoid" id="Q8K284"/>
<dbReference type="OMA" id="TIIQDGI"/>
<dbReference type="OrthoDB" id="68020at2759"/>
<dbReference type="PhylomeDB" id="Q8K284"/>
<dbReference type="TreeFam" id="TF351624"/>
<dbReference type="Reactome" id="R-MMU-76061">
    <property type="pathway name" value="RNA Polymerase III Transcription Initiation From Type 1 Promoter"/>
</dbReference>
<dbReference type="Reactome" id="R-MMU-76066">
    <property type="pathway name" value="RNA Polymerase III Transcription Initiation From Type 2 Promoter"/>
</dbReference>
<dbReference type="BioGRID-ORCS" id="233863">
    <property type="hits" value="25 hits in 78 CRISPR screens"/>
</dbReference>
<dbReference type="ChiTaRS" id="Gtf3c1">
    <property type="organism name" value="mouse"/>
</dbReference>
<dbReference type="PRO" id="PR:Q8K284"/>
<dbReference type="Proteomes" id="UP000000589">
    <property type="component" value="Chromosome 7"/>
</dbReference>
<dbReference type="RNAct" id="Q8K284">
    <property type="molecule type" value="protein"/>
</dbReference>
<dbReference type="Bgee" id="ENSMUSG00000032777">
    <property type="expression patterns" value="Expressed in embryonic post-anal tail and 270 other cell types or tissues"/>
</dbReference>
<dbReference type="ExpressionAtlas" id="Q8K284">
    <property type="expression patterns" value="baseline and differential"/>
</dbReference>
<dbReference type="GO" id="GO:0005730">
    <property type="term" value="C:nucleolus"/>
    <property type="evidence" value="ECO:0007669"/>
    <property type="project" value="Ensembl"/>
</dbReference>
<dbReference type="GO" id="GO:0005654">
    <property type="term" value="C:nucleoplasm"/>
    <property type="evidence" value="ECO:0007669"/>
    <property type="project" value="Ensembl"/>
</dbReference>
<dbReference type="GO" id="GO:1990904">
    <property type="term" value="C:ribonucleoprotein complex"/>
    <property type="evidence" value="ECO:0000314"/>
    <property type="project" value="MGI"/>
</dbReference>
<dbReference type="GO" id="GO:0000127">
    <property type="term" value="C:transcription factor TFIIIC complex"/>
    <property type="evidence" value="ECO:0007669"/>
    <property type="project" value="Ensembl"/>
</dbReference>
<dbReference type="GO" id="GO:0003677">
    <property type="term" value="F:DNA binding"/>
    <property type="evidence" value="ECO:0007669"/>
    <property type="project" value="UniProtKB-KW"/>
</dbReference>
<dbReference type="GO" id="GO:0000995">
    <property type="term" value="F:RNA polymerase III general transcription initiation factor activity"/>
    <property type="evidence" value="ECO:0007669"/>
    <property type="project" value="Ensembl"/>
</dbReference>
<dbReference type="GO" id="GO:0006384">
    <property type="term" value="P:transcription initiation at RNA polymerase III promoter"/>
    <property type="evidence" value="ECO:0007669"/>
    <property type="project" value="InterPro"/>
</dbReference>
<dbReference type="CDD" id="cd16169">
    <property type="entry name" value="Tau138_eWH"/>
    <property type="match status" value="1"/>
</dbReference>
<dbReference type="InterPro" id="IPR056467">
    <property type="entry name" value="eWH_GTF3C1"/>
</dbReference>
<dbReference type="InterPro" id="IPR044210">
    <property type="entry name" value="Tfc3-like"/>
</dbReference>
<dbReference type="InterPro" id="IPR035625">
    <property type="entry name" value="Tfc3-like_eWH"/>
</dbReference>
<dbReference type="InterPro" id="IPR007309">
    <property type="entry name" value="TFIIIC_Bblock-bd"/>
</dbReference>
<dbReference type="InterPro" id="IPR056428">
    <property type="entry name" value="WH_GTF3C1"/>
</dbReference>
<dbReference type="PANTHER" id="PTHR15180">
    <property type="entry name" value="GENERAL TRANSCRIPTION FACTOR 3C POLYPEPTIDE 1"/>
    <property type="match status" value="1"/>
</dbReference>
<dbReference type="PANTHER" id="PTHR15180:SF1">
    <property type="entry name" value="GENERAL TRANSCRIPTION FACTOR 3C POLYPEPTIDE 1"/>
    <property type="match status" value="1"/>
</dbReference>
<dbReference type="Pfam" id="PF04182">
    <property type="entry name" value="B-block_TFIIIC"/>
    <property type="match status" value="1"/>
</dbReference>
<dbReference type="Pfam" id="PF24101">
    <property type="entry name" value="eWH_GTF3C1"/>
    <property type="match status" value="1"/>
</dbReference>
<dbReference type="Pfam" id="PF23704">
    <property type="entry name" value="WH_GTF3C1_N"/>
    <property type="match status" value="1"/>
</dbReference>
<protein>
    <recommendedName>
        <fullName>General transcription factor 3C polypeptide 1</fullName>
    </recommendedName>
    <alternativeName>
        <fullName>TF3C-alpha</fullName>
    </alternativeName>
    <alternativeName>
        <fullName>TFIIIC box B-binding subunit</fullName>
    </alternativeName>
    <alternativeName>
        <fullName>Transcription factor IIIC 220 kDa subunit</fullName>
        <shortName>TFIIIC 220 kDa subunit</shortName>
        <shortName>TFIIIC220</shortName>
    </alternativeName>
    <alternativeName>
        <fullName>Transcription factor IIIC subunit alpha</fullName>
    </alternativeName>
</protein>
<accession>Q8K284</accession>
<accession>Q8CAL9</accession>
<comment type="function">
    <text evidence="1">Required for RNA polymerase III-mediated transcription. Component of TFIIIC that initiates transcription complex assembly on tRNA and is required for transcription of 5S rRNA and other stable nuclear and cytoplasmic RNAs. Binds to the box B promoter element (By similarity).</text>
</comment>
<comment type="subunit">
    <text evidence="2">Part of the TFIIIC subcomplex TFIIIC2, consisting of six subunits, GTF3C1, GTF3C2, GTF3C3, GTF3C4, GTF3C5 and GTF3C6. Interacts with IGHMBP2. Interacts with MAF1.</text>
</comment>
<comment type="subcellular location">
    <subcellularLocation>
        <location evidence="1">Nucleus</location>
    </subcellularLocation>
</comment>
<comment type="alternative products">
    <event type="alternative splicing"/>
    <isoform>
        <id>Q8K284-1</id>
        <name>1</name>
        <sequence type="displayed"/>
    </isoform>
    <isoform>
        <id>Q8K284-2</id>
        <name>2</name>
        <sequence type="described" ref="VSP_010576"/>
    </isoform>
    <isoform>
        <id>Q8K284-3</id>
        <name>3</name>
        <sequence type="described" ref="VSP_010573 VSP_010574 VSP_010575"/>
    </isoform>
</comment>
<comment type="miscellaneous">
    <molecule>Isoform 2</molecule>
    <text evidence="6">Incomplete sequence.</text>
</comment>
<comment type="similarity">
    <text evidence="6">Belongs to the TFIIIC subunit 1 family.</text>
</comment>
<comment type="sequence caution" evidence="6">
    <conflict type="erroneous initiation">
        <sequence resource="EMBL-CDS" id="AAH32208"/>
    </conflict>
</comment>
<reference key="1">
    <citation type="journal article" date="2005" name="Science">
        <title>The transcriptional landscape of the mammalian genome.</title>
        <authorList>
            <person name="Carninci P."/>
            <person name="Kasukawa T."/>
            <person name="Katayama S."/>
            <person name="Gough J."/>
            <person name="Frith M.C."/>
            <person name="Maeda N."/>
            <person name="Oyama R."/>
            <person name="Ravasi T."/>
            <person name="Lenhard B."/>
            <person name="Wells C."/>
            <person name="Kodzius R."/>
            <person name="Shimokawa K."/>
            <person name="Bajic V.B."/>
            <person name="Brenner S.E."/>
            <person name="Batalov S."/>
            <person name="Forrest A.R."/>
            <person name="Zavolan M."/>
            <person name="Davis M.J."/>
            <person name="Wilming L.G."/>
            <person name="Aidinis V."/>
            <person name="Allen J.E."/>
            <person name="Ambesi-Impiombato A."/>
            <person name="Apweiler R."/>
            <person name="Aturaliya R.N."/>
            <person name="Bailey T.L."/>
            <person name="Bansal M."/>
            <person name="Baxter L."/>
            <person name="Beisel K.W."/>
            <person name="Bersano T."/>
            <person name="Bono H."/>
            <person name="Chalk A.M."/>
            <person name="Chiu K.P."/>
            <person name="Choudhary V."/>
            <person name="Christoffels A."/>
            <person name="Clutterbuck D.R."/>
            <person name="Crowe M.L."/>
            <person name="Dalla E."/>
            <person name="Dalrymple B.P."/>
            <person name="de Bono B."/>
            <person name="Della Gatta G."/>
            <person name="di Bernardo D."/>
            <person name="Down T."/>
            <person name="Engstrom P."/>
            <person name="Fagiolini M."/>
            <person name="Faulkner G."/>
            <person name="Fletcher C.F."/>
            <person name="Fukushima T."/>
            <person name="Furuno M."/>
            <person name="Futaki S."/>
            <person name="Gariboldi M."/>
            <person name="Georgii-Hemming P."/>
            <person name="Gingeras T.R."/>
            <person name="Gojobori T."/>
            <person name="Green R.E."/>
            <person name="Gustincich S."/>
            <person name="Harbers M."/>
            <person name="Hayashi Y."/>
            <person name="Hensch T.K."/>
            <person name="Hirokawa N."/>
            <person name="Hill D."/>
            <person name="Huminiecki L."/>
            <person name="Iacono M."/>
            <person name="Ikeo K."/>
            <person name="Iwama A."/>
            <person name="Ishikawa T."/>
            <person name="Jakt M."/>
            <person name="Kanapin A."/>
            <person name="Katoh M."/>
            <person name="Kawasawa Y."/>
            <person name="Kelso J."/>
            <person name="Kitamura H."/>
            <person name="Kitano H."/>
            <person name="Kollias G."/>
            <person name="Krishnan S.P."/>
            <person name="Kruger A."/>
            <person name="Kummerfeld S.K."/>
            <person name="Kurochkin I.V."/>
            <person name="Lareau L.F."/>
            <person name="Lazarevic D."/>
            <person name="Lipovich L."/>
            <person name="Liu J."/>
            <person name="Liuni S."/>
            <person name="McWilliam S."/>
            <person name="Madan Babu M."/>
            <person name="Madera M."/>
            <person name="Marchionni L."/>
            <person name="Matsuda H."/>
            <person name="Matsuzawa S."/>
            <person name="Miki H."/>
            <person name="Mignone F."/>
            <person name="Miyake S."/>
            <person name="Morris K."/>
            <person name="Mottagui-Tabar S."/>
            <person name="Mulder N."/>
            <person name="Nakano N."/>
            <person name="Nakauchi H."/>
            <person name="Ng P."/>
            <person name="Nilsson R."/>
            <person name="Nishiguchi S."/>
            <person name="Nishikawa S."/>
            <person name="Nori F."/>
            <person name="Ohara O."/>
            <person name="Okazaki Y."/>
            <person name="Orlando V."/>
            <person name="Pang K.C."/>
            <person name="Pavan W.J."/>
            <person name="Pavesi G."/>
            <person name="Pesole G."/>
            <person name="Petrovsky N."/>
            <person name="Piazza S."/>
            <person name="Reed J."/>
            <person name="Reid J.F."/>
            <person name="Ring B.Z."/>
            <person name="Ringwald M."/>
            <person name="Rost B."/>
            <person name="Ruan Y."/>
            <person name="Salzberg S.L."/>
            <person name="Sandelin A."/>
            <person name="Schneider C."/>
            <person name="Schoenbach C."/>
            <person name="Sekiguchi K."/>
            <person name="Semple C.A."/>
            <person name="Seno S."/>
            <person name="Sessa L."/>
            <person name="Sheng Y."/>
            <person name="Shibata Y."/>
            <person name="Shimada H."/>
            <person name="Shimada K."/>
            <person name="Silva D."/>
            <person name="Sinclair B."/>
            <person name="Sperling S."/>
            <person name="Stupka E."/>
            <person name="Sugiura K."/>
            <person name="Sultana R."/>
            <person name="Takenaka Y."/>
            <person name="Taki K."/>
            <person name="Tammoja K."/>
            <person name="Tan S.L."/>
            <person name="Tang S."/>
            <person name="Taylor M.S."/>
            <person name="Tegner J."/>
            <person name="Teichmann S.A."/>
            <person name="Ueda H.R."/>
            <person name="van Nimwegen E."/>
            <person name="Verardo R."/>
            <person name="Wei C.L."/>
            <person name="Yagi K."/>
            <person name="Yamanishi H."/>
            <person name="Zabarovsky E."/>
            <person name="Zhu S."/>
            <person name="Zimmer A."/>
            <person name="Hide W."/>
            <person name="Bult C."/>
            <person name="Grimmond S.M."/>
            <person name="Teasdale R.D."/>
            <person name="Liu E.T."/>
            <person name="Brusic V."/>
            <person name="Quackenbush J."/>
            <person name="Wahlestedt C."/>
            <person name="Mattick J.S."/>
            <person name="Hume D.A."/>
            <person name="Kai C."/>
            <person name="Sasaki D."/>
            <person name="Tomaru Y."/>
            <person name="Fukuda S."/>
            <person name="Kanamori-Katayama M."/>
            <person name="Suzuki M."/>
            <person name="Aoki J."/>
            <person name="Arakawa T."/>
            <person name="Iida J."/>
            <person name="Imamura K."/>
            <person name="Itoh M."/>
            <person name="Kato T."/>
            <person name="Kawaji H."/>
            <person name="Kawagashira N."/>
            <person name="Kawashima T."/>
            <person name="Kojima M."/>
            <person name="Kondo S."/>
            <person name="Konno H."/>
            <person name="Nakano K."/>
            <person name="Ninomiya N."/>
            <person name="Nishio T."/>
            <person name="Okada M."/>
            <person name="Plessy C."/>
            <person name="Shibata K."/>
            <person name="Shiraki T."/>
            <person name="Suzuki S."/>
            <person name="Tagami M."/>
            <person name="Waki K."/>
            <person name="Watahiki A."/>
            <person name="Okamura-Oho Y."/>
            <person name="Suzuki H."/>
            <person name="Kawai J."/>
            <person name="Hayashizaki Y."/>
        </authorList>
    </citation>
    <scope>NUCLEOTIDE SEQUENCE [LARGE SCALE MRNA] (ISOFORM 3)</scope>
    <source>
        <strain>C57BL/6J</strain>
        <tissue>Hypothalamus</tissue>
    </source>
</reference>
<reference key="2">
    <citation type="journal article" date="2004" name="Genome Res.">
        <title>The status, quality, and expansion of the NIH full-length cDNA project: the Mammalian Gene Collection (MGC).</title>
        <authorList>
            <consortium name="The MGC Project Team"/>
        </authorList>
    </citation>
    <scope>NUCLEOTIDE SEQUENCE [LARGE SCALE MRNA] (ISOFORMS 1 AND 2)</scope>
    <source>
        <strain>C57BL/6J</strain>
        <tissue>Brain</tissue>
        <tissue>Mammary tumor</tissue>
    </source>
</reference>
<reference key="3">
    <citation type="journal article" date="2007" name="Proc. Natl. Acad. Sci. U.S.A.">
        <title>Large-scale phosphorylation analysis of mouse liver.</title>
        <authorList>
            <person name="Villen J."/>
            <person name="Beausoleil S.A."/>
            <person name="Gerber S.A."/>
            <person name="Gygi S.P."/>
        </authorList>
    </citation>
    <scope>PHOSPHORYLATION [LARGE SCALE ANALYSIS] AT SER-1890</scope>
    <scope>IDENTIFICATION BY MASS SPECTROMETRY [LARGE SCALE ANALYSIS]</scope>
    <source>
        <tissue>Liver</tissue>
    </source>
</reference>
<reference key="4">
    <citation type="journal article" date="2010" name="Cell">
        <title>A tissue-specific atlas of mouse protein phosphorylation and expression.</title>
        <authorList>
            <person name="Huttlin E.L."/>
            <person name="Jedrychowski M.P."/>
            <person name="Elias J.E."/>
            <person name="Goswami T."/>
            <person name="Rad R."/>
            <person name="Beausoleil S.A."/>
            <person name="Villen J."/>
            <person name="Haas W."/>
            <person name="Sowa M.E."/>
            <person name="Gygi S.P."/>
        </authorList>
    </citation>
    <scope>PHOSPHORYLATION [LARGE SCALE ANALYSIS] AT THR-1196 AND SER-1890</scope>
    <scope>IDENTIFICATION BY MASS SPECTROMETRY [LARGE SCALE ANALYSIS]</scope>
    <source>
        <tissue>Brain</tissue>
        <tissue>Brown adipose tissue</tissue>
        <tissue>Heart</tissue>
        <tissue>Kidney</tissue>
        <tissue>Liver</tissue>
        <tissue>Lung</tissue>
        <tissue>Pancreas</tissue>
        <tissue>Spleen</tissue>
        <tissue>Testis</tissue>
    </source>
</reference>